<name>NU4C_HORVU</name>
<accession>O03060</accession>
<accession>A1E9P0</accession>
<accession>O98695</accession>
<accession>Q40044</accession>
<protein>
    <recommendedName>
        <fullName>NAD(P)H-quinone oxidoreductase chain 4, chloroplastic</fullName>
        <ecNumber>7.1.1.-</ecNumber>
    </recommendedName>
    <alternativeName>
        <fullName>NAD(P)H dehydrogenase, chain 4</fullName>
    </alternativeName>
    <alternativeName>
        <fullName>NADH-plastoquinone oxidoreductase chain 4</fullName>
    </alternativeName>
</protein>
<reference key="1">
    <citation type="online journal article" date="1997" name="Plant Gene Register">
        <title>Plastid ndhD gene of barley (Hordeum vulgare L.), sequence and transcript editing.</title>
        <authorList>
            <person name="del Campo E.M."/>
            <person name="Sabater B."/>
            <person name="Martin M."/>
        </authorList>
        <locator>PGR97-090</locator>
    </citation>
    <scope>NUCLEOTIDE SEQUENCE [GENOMIC DNA]</scope>
    <scope>RNA EDITING OF POSITION 293</scope>
    <source>
        <strain>cv. Hassan</strain>
    </source>
</reference>
<reference key="2">
    <citation type="journal article" date="2000" name="Nucleic Acids Res.">
        <title>Transcripts of the ndhH-D operon of barley plastids: possible role of unedited site III in splicing of the ndhA intron.</title>
        <authorList>
            <person name="del Campo E.M."/>
            <person name="Sabater B."/>
            <person name="Martin M."/>
        </authorList>
    </citation>
    <scope>NUCLEOTIDE SEQUENCE [GENOMIC DNA]</scope>
    <source>
        <strain>cv. Hassan</strain>
        <tissue>Leaf</tissue>
    </source>
</reference>
<reference key="3">
    <citation type="journal article" date="2007" name="Theor. Appl. Genet.">
        <title>Complete chloroplast genome sequences of Hordeum vulgare, Sorghum bicolor and Agrostis stolonifera, and comparative analyses with other grass genomes.</title>
        <authorList>
            <person name="Saski C."/>
            <person name="Lee S.-B."/>
            <person name="Fjellheim S."/>
            <person name="Guda C."/>
            <person name="Jansen R.K."/>
            <person name="Luo H."/>
            <person name="Tomkins J."/>
            <person name="Rognli O.A."/>
            <person name="Daniell H."/>
            <person name="Clarke J.L."/>
        </authorList>
    </citation>
    <scope>NUCLEOTIDE SEQUENCE [LARGE SCALE GENOMIC DNA]</scope>
    <source>
        <strain>cv. Morex</strain>
    </source>
</reference>
<reference key="4">
    <citation type="submission" date="1992-11" db="EMBL/GenBank/DDBJ databases">
        <title>A barley chloroplast clone encoding psaC and part of ndhD: RNA editing of the ndhD initiation codon in barley?</title>
        <authorList>
            <person name="Okkels J.-S."/>
            <person name="Moeller B.-L."/>
        </authorList>
    </citation>
    <scope>NUCLEOTIDE SEQUENCE [GENOMIC DNA] OF 1-8</scope>
</reference>
<reference key="5">
    <citation type="journal article" date="1994" name="Gene">
        <title>The role of RNA editing in conservation of start codons in chloroplast genomes.</title>
        <authorList>
            <person name="Neckermann K."/>
            <person name="Zeltz P."/>
            <person name="Igloi G.L."/>
            <person name="Koessel H."/>
            <person name="Maier R.M."/>
        </authorList>
    </citation>
    <scope>LACK OF RNA EDITING OF INITIATION CODON</scope>
</reference>
<keyword id="KW-0002">3D-structure</keyword>
<keyword id="KW-0150">Chloroplast</keyword>
<keyword id="KW-0472">Membrane</keyword>
<keyword id="KW-0520">NAD</keyword>
<keyword id="KW-0521">NADP</keyword>
<keyword id="KW-0934">Plastid</keyword>
<keyword id="KW-0618">Plastoquinone</keyword>
<keyword id="KW-0874">Quinone</keyword>
<keyword id="KW-0691">RNA editing</keyword>
<keyword id="KW-0793">Thylakoid</keyword>
<keyword id="KW-1278">Translocase</keyword>
<keyword id="KW-0812">Transmembrane</keyword>
<keyword id="KW-1133">Transmembrane helix</keyword>
<proteinExistence type="evidence at protein level"/>
<organism>
    <name type="scientific">Hordeum vulgare</name>
    <name type="common">Barley</name>
    <dbReference type="NCBI Taxonomy" id="4513"/>
    <lineage>
        <taxon>Eukaryota</taxon>
        <taxon>Viridiplantae</taxon>
        <taxon>Streptophyta</taxon>
        <taxon>Embryophyta</taxon>
        <taxon>Tracheophyta</taxon>
        <taxon>Spermatophyta</taxon>
        <taxon>Magnoliopsida</taxon>
        <taxon>Liliopsida</taxon>
        <taxon>Poales</taxon>
        <taxon>Poaceae</taxon>
        <taxon>BOP clade</taxon>
        <taxon>Pooideae</taxon>
        <taxon>Triticodae</taxon>
        <taxon>Triticeae</taxon>
        <taxon>Hordeinae</taxon>
        <taxon>Hordeum</taxon>
    </lineage>
</organism>
<evidence type="ECO:0000255" key="1"/>
<evidence type="ECO:0000269" key="2">
    <source ref="1"/>
</evidence>
<evidence type="ECO:0000305" key="3"/>
<feature type="chain" id="PRO_0000118014" description="NAD(P)H-quinone oxidoreductase chain 4, chloroplastic">
    <location>
        <begin position="1"/>
        <end position="500"/>
    </location>
</feature>
<feature type="transmembrane region" description="Helical" evidence="1">
    <location>
        <begin position="4"/>
        <end position="24"/>
    </location>
</feature>
<feature type="transmembrane region" description="Helical" evidence="1">
    <location>
        <begin position="37"/>
        <end position="57"/>
    </location>
</feature>
<feature type="transmembrane region" description="Helical" evidence="1">
    <location>
        <begin position="87"/>
        <end position="107"/>
    </location>
</feature>
<feature type="transmembrane region" description="Helical" evidence="1">
    <location>
        <begin position="113"/>
        <end position="130"/>
    </location>
</feature>
<feature type="transmembrane region" description="Helical" evidence="1">
    <location>
        <begin position="134"/>
        <end position="154"/>
    </location>
</feature>
<feature type="transmembrane region" description="Helical" evidence="1">
    <location>
        <begin position="167"/>
        <end position="187"/>
    </location>
</feature>
<feature type="transmembrane region" description="Helical" evidence="1">
    <location>
        <begin position="211"/>
        <end position="231"/>
    </location>
</feature>
<feature type="transmembrane region" description="Helical" evidence="1">
    <location>
        <begin position="242"/>
        <end position="262"/>
    </location>
</feature>
<feature type="transmembrane region" description="Helical" evidence="1">
    <location>
        <begin position="274"/>
        <end position="294"/>
    </location>
</feature>
<feature type="transmembrane region" description="Helical" evidence="1">
    <location>
        <begin position="313"/>
        <end position="333"/>
    </location>
</feature>
<feature type="transmembrane region" description="Helical" evidence="1">
    <location>
        <begin position="334"/>
        <end position="354"/>
    </location>
</feature>
<feature type="transmembrane region" description="Helical" evidence="1">
    <location>
        <begin position="386"/>
        <end position="406"/>
    </location>
</feature>
<feature type="transmembrane region" description="Helical" evidence="1">
    <location>
        <begin position="417"/>
        <end position="437"/>
    </location>
</feature>
<feature type="transmembrane region" description="Helical" evidence="1">
    <location>
        <begin position="462"/>
        <end position="482"/>
    </location>
</feature>
<feature type="sequence conflict" description="In Ref. 2; CAA09817." evidence="3" ref="2">
    <original>ANFVDSGPRELFILICI</original>
    <variation>LCYARCSMDTSYLMFQT</variation>
    <location>
        <begin position="452"/>
        <end position="468"/>
    </location>
</feature>
<geneLocation type="chloroplast"/>
<comment type="catalytic activity">
    <reaction>
        <text>a plastoquinone + NADH + (n+1) H(+)(in) = a plastoquinol + NAD(+) + n H(+)(out)</text>
        <dbReference type="Rhea" id="RHEA:42608"/>
        <dbReference type="Rhea" id="RHEA-COMP:9561"/>
        <dbReference type="Rhea" id="RHEA-COMP:9562"/>
        <dbReference type="ChEBI" id="CHEBI:15378"/>
        <dbReference type="ChEBI" id="CHEBI:17757"/>
        <dbReference type="ChEBI" id="CHEBI:57540"/>
        <dbReference type="ChEBI" id="CHEBI:57945"/>
        <dbReference type="ChEBI" id="CHEBI:62192"/>
    </reaction>
</comment>
<comment type="catalytic activity">
    <reaction>
        <text>a plastoquinone + NADPH + (n+1) H(+)(in) = a plastoquinol + NADP(+) + n H(+)(out)</text>
        <dbReference type="Rhea" id="RHEA:42612"/>
        <dbReference type="Rhea" id="RHEA-COMP:9561"/>
        <dbReference type="Rhea" id="RHEA-COMP:9562"/>
        <dbReference type="ChEBI" id="CHEBI:15378"/>
        <dbReference type="ChEBI" id="CHEBI:17757"/>
        <dbReference type="ChEBI" id="CHEBI:57783"/>
        <dbReference type="ChEBI" id="CHEBI:58349"/>
        <dbReference type="ChEBI" id="CHEBI:62192"/>
    </reaction>
</comment>
<comment type="subcellular location">
    <subcellularLocation>
        <location evidence="3">Plastid</location>
        <location evidence="3">Chloroplast thylakoid membrane</location>
        <topology evidence="3">Multi-pass membrane protein</topology>
    </subcellularLocation>
</comment>
<comment type="RNA editing">
    <location>
        <position position="293" evidence="2"/>
    </location>
</comment>
<comment type="similarity">
    <text evidence="3">Belongs to the complex I subunit 4 family.</text>
</comment>
<comment type="sequence caution" evidence="3">
    <conflict type="erroneous initiation">
        <sequence resource="EMBL-CDS" id="AAA32954"/>
    </conflict>
</comment>
<sequence>MSYFPWLTILVVLPIFAGSLIFFLPHKGNKIVRWYTISICLLEFLLMTYAFCYHFQLEDPLIQLKEDYKWIDVFDFHWRLGIDGLSLGSILLTGFITTLATLAAWPITRNSRLFYFLMLAMYSGQIGLFSSRDLLLFFIMWELELIPVYLLLSMWGGKRRLYSATKFILYTAGGSIFFLIGVLGMGLYGSNEPGLDLERLINQSYPATLEILLYFGFLIAYAVKLPIIPLHTWLPDTHGEAHYSTCMLLAGILLKMGAYGLIRINMELLPHAHYLFSPWLVIIGAIQIIYAALTSLGQRNFKKRIAYSSVSHMGFIIIGIGSITNIGLNGAILQILSHGFIGATLFFLAGTASDRMRLVYLEELGGISIPMPKIFTMFSSFSMASLALPGMSGFVAELVVFFGLITSPKFLLMPKALITFVMAIGMILTPIYLLSMLRQMFYGYKLFNVPNANFVDSGPRELFILICIFLPVIGIGIYPDFVLSLSVDRVEALLSNYYPK</sequence>
<gene>
    <name type="primary">ndhD</name>
</gene>
<dbReference type="EC" id="7.1.1.-"/>
<dbReference type="EMBL" id="Y12258">
    <property type="protein sequence ID" value="CAA72935.1"/>
    <property type="status" value="ALT_SEQ"/>
    <property type="molecule type" value="Genomic_DNA"/>
</dbReference>
<dbReference type="EMBL" id="AJ011848">
    <property type="protein sequence ID" value="CAA09817.1"/>
    <property type="status" value="ALT_SEQ"/>
    <property type="molecule type" value="Genomic_DNA"/>
</dbReference>
<dbReference type="EMBL" id="EF115541">
    <property type="protein sequence ID" value="ABK79462.1"/>
    <property type="status" value="ALT_SEQ"/>
    <property type="molecule type" value="Genomic_DNA"/>
</dbReference>
<dbReference type="EMBL" id="L06607">
    <property type="protein sequence ID" value="AAA32954.1"/>
    <property type="status" value="ALT_INIT"/>
    <property type="molecule type" value="Genomic_DNA"/>
</dbReference>
<dbReference type="PDB" id="7EU3">
    <property type="method" value="EM"/>
    <property type="resolution" value="3.70 A"/>
    <property type="chains" value="D=2-500"/>
</dbReference>
<dbReference type="PDBsum" id="7EU3"/>
<dbReference type="SMR" id="O03060"/>
<dbReference type="GO" id="GO:0009535">
    <property type="term" value="C:chloroplast thylakoid membrane"/>
    <property type="evidence" value="ECO:0007669"/>
    <property type="project" value="UniProtKB-SubCell"/>
</dbReference>
<dbReference type="GO" id="GO:0008137">
    <property type="term" value="F:NADH dehydrogenase (ubiquinone) activity"/>
    <property type="evidence" value="ECO:0007669"/>
    <property type="project" value="InterPro"/>
</dbReference>
<dbReference type="GO" id="GO:0048039">
    <property type="term" value="F:ubiquinone binding"/>
    <property type="evidence" value="ECO:0007669"/>
    <property type="project" value="TreeGrafter"/>
</dbReference>
<dbReference type="GO" id="GO:0042773">
    <property type="term" value="P:ATP synthesis coupled electron transport"/>
    <property type="evidence" value="ECO:0007669"/>
    <property type="project" value="InterPro"/>
</dbReference>
<dbReference type="GO" id="GO:0015990">
    <property type="term" value="P:electron transport coupled proton transport"/>
    <property type="evidence" value="ECO:0007669"/>
    <property type="project" value="TreeGrafter"/>
</dbReference>
<dbReference type="HAMAP" id="MF_00491">
    <property type="entry name" value="NDH1_NuoM"/>
    <property type="match status" value="1"/>
</dbReference>
<dbReference type="InterPro" id="IPR022997">
    <property type="entry name" value="NADH_Q_OxRdtase_chain4"/>
</dbReference>
<dbReference type="InterPro" id="IPR010227">
    <property type="entry name" value="NADH_Q_OxRdtase_chainM/4"/>
</dbReference>
<dbReference type="InterPro" id="IPR003918">
    <property type="entry name" value="NADH_UbQ_OxRdtase"/>
</dbReference>
<dbReference type="InterPro" id="IPR001750">
    <property type="entry name" value="ND/Mrp_TM"/>
</dbReference>
<dbReference type="NCBIfam" id="TIGR01972">
    <property type="entry name" value="NDH_I_M"/>
    <property type="match status" value="1"/>
</dbReference>
<dbReference type="PANTHER" id="PTHR43507:SF21">
    <property type="entry name" value="NAD(P)H-QUINONE OXIDOREDUCTASE CHAIN 4, CHLOROPLASTIC"/>
    <property type="match status" value="1"/>
</dbReference>
<dbReference type="PANTHER" id="PTHR43507">
    <property type="entry name" value="NADH-UBIQUINONE OXIDOREDUCTASE CHAIN 4"/>
    <property type="match status" value="1"/>
</dbReference>
<dbReference type="Pfam" id="PF00361">
    <property type="entry name" value="Proton_antipo_M"/>
    <property type="match status" value="1"/>
</dbReference>
<dbReference type="PRINTS" id="PR01437">
    <property type="entry name" value="NUOXDRDTASE4"/>
</dbReference>